<feature type="chain" id="PRO_0000107569" description="Acetate kinase 1">
    <location>
        <begin position="1"/>
        <end position="395"/>
    </location>
</feature>
<feature type="active site" description="Proton donor/acceptor" evidence="1">
    <location>
        <position position="146"/>
    </location>
</feature>
<feature type="binding site" evidence="1">
    <location>
        <position position="8"/>
    </location>
    <ligand>
        <name>Mg(2+)</name>
        <dbReference type="ChEBI" id="CHEBI:18420"/>
    </ligand>
</feature>
<feature type="binding site" evidence="1">
    <location>
        <position position="15"/>
    </location>
    <ligand>
        <name>ATP</name>
        <dbReference type="ChEBI" id="CHEBI:30616"/>
    </ligand>
</feature>
<feature type="binding site" evidence="1">
    <location>
        <position position="89"/>
    </location>
    <ligand>
        <name>substrate</name>
    </ligand>
</feature>
<feature type="binding site" evidence="1">
    <location>
        <begin position="206"/>
        <end position="210"/>
    </location>
    <ligand>
        <name>ATP</name>
        <dbReference type="ChEBI" id="CHEBI:30616"/>
    </ligand>
</feature>
<feature type="binding site" evidence="1">
    <location>
        <begin position="283"/>
        <end position="285"/>
    </location>
    <ligand>
        <name>ATP</name>
        <dbReference type="ChEBI" id="CHEBI:30616"/>
    </ligand>
</feature>
<feature type="binding site" evidence="1">
    <location>
        <begin position="330"/>
        <end position="334"/>
    </location>
    <ligand>
        <name>ATP</name>
        <dbReference type="ChEBI" id="CHEBI:30616"/>
    </ligand>
</feature>
<feature type="binding site" evidence="1">
    <location>
        <position position="382"/>
    </location>
    <ligand>
        <name>Mg(2+)</name>
        <dbReference type="ChEBI" id="CHEBI:18420"/>
    </ligand>
</feature>
<feature type="site" description="Transition state stabilizer" evidence="1">
    <location>
        <position position="178"/>
    </location>
</feature>
<feature type="site" description="Transition state stabilizer" evidence="1">
    <location>
        <position position="239"/>
    </location>
</feature>
<name>ACKA1_LACLA</name>
<organism>
    <name type="scientific">Lactococcus lactis subsp. lactis (strain IL1403)</name>
    <name type="common">Streptococcus lactis</name>
    <dbReference type="NCBI Taxonomy" id="272623"/>
    <lineage>
        <taxon>Bacteria</taxon>
        <taxon>Bacillati</taxon>
        <taxon>Bacillota</taxon>
        <taxon>Bacilli</taxon>
        <taxon>Lactobacillales</taxon>
        <taxon>Streptococcaceae</taxon>
        <taxon>Lactococcus</taxon>
    </lineage>
</organism>
<sequence length="395" mass="43138">MTKTLAVNAGSSSMKWQMYEMPEEKVLAKGLIERIGLKDSIVTVKFGEQKEERVFDIPNHTEAVEVLLEDLKRLKIVEEFTEITGVGHRVVAGGEIFQKSTVVTPEVLQQVKDLSALAPLHNPANAAGIEAFLNLLPDATSVVVFDTAFHTTMPEKAFRYPLPKKYYTDYAVRKYGAHGTSHMYVSQEAAKLLGKPIEETKIITAHIGNGASLTAVKGGKSIDTSMGFTPLAGVMMGTRTGEMDPSVFPYLIENDSELKDAQGVVDMMNKESGLYGVSGISSDMRDIIAAKDTDTDAKLAFEMYVDRIQKFIGQYLAVLNGADALVFTAGIGENSVPVREAILSGLTWFGIEVDPEKNVFGVEGEISTPHSRVKVFVIPTDEELVIARDVEALKK</sequence>
<accession>Q9CE35</accession>
<protein>
    <recommendedName>
        <fullName evidence="1">Acetate kinase 1</fullName>
        <ecNumber evidence="1">2.7.2.1</ecNumber>
    </recommendedName>
    <alternativeName>
        <fullName evidence="1">Acetokinase 1</fullName>
    </alternativeName>
</protein>
<proteinExistence type="inferred from homology"/>
<keyword id="KW-0067">ATP-binding</keyword>
<keyword id="KW-0963">Cytoplasm</keyword>
<keyword id="KW-0418">Kinase</keyword>
<keyword id="KW-0460">Magnesium</keyword>
<keyword id="KW-0479">Metal-binding</keyword>
<keyword id="KW-0547">Nucleotide-binding</keyword>
<keyword id="KW-1185">Reference proteome</keyword>
<keyword id="KW-0808">Transferase</keyword>
<evidence type="ECO:0000255" key="1">
    <source>
        <dbReference type="HAMAP-Rule" id="MF_00020"/>
    </source>
</evidence>
<gene>
    <name evidence="1" type="primary">ackA1</name>
    <name type="ordered locus">LL2013</name>
    <name type="ORF">L73818</name>
</gene>
<reference key="1">
    <citation type="journal article" date="2001" name="Genome Res.">
        <title>The complete genome sequence of the lactic acid bacterium Lactococcus lactis ssp. lactis IL1403.</title>
        <authorList>
            <person name="Bolotin A."/>
            <person name="Wincker P."/>
            <person name="Mauger S."/>
            <person name="Jaillon O."/>
            <person name="Malarme K."/>
            <person name="Weissenbach J."/>
            <person name="Ehrlich S.D."/>
            <person name="Sorokin A."/>
        </authorList>
    </citation>
    <scope>NUCLEOTIDE SEQUENCE [LARGE SCALE GENOMIC DNA]</scope>
    <source>
        <strain>IL1403</strain>
    </source>
</reference>
<dbReference type="EC" id="2.7.2.1" evidence="1"/>
<dbReference type="EMBL" id="AE005176">
    <property type="protein sequence ID" value="AAK06111.1"/>
    <property type="molecule type" value="Genomic_DNA"/>
</dbReference>
<dbReference type="PIR" id="E86876">
    <property type="entry name" value="E86876"/>
</dbReference>
<dbReference type="RefSeq" id="NP_268170.1">
    <property type="nucleotide sequence ID" value="NC_002662.1"/>
</dbReference>
<dbReference type="RefSeq" id="WP_004254593.1">
    <property type="nucleotide sequence ID" value="NC_002662.1"/>
</dbReference>
<dbReference type="SMR" id="Q9CE35"/>
<dbReference type="PaxDb" id="272623-L73818"/>
<dbReference type="EnsemblBacteria" id="AAK06111">
    <property type="protein sequence ID" value="AAK06111"/>
    <property type="gene ID" value="L73818"/>
</dbReference>
<dbReference type="KEGG" id="lla:L73818"/>
<dbReference type="PATRIC" id="fig|272623.7.peg.2168"/>
<dbReference type="eggNOG" id="COG0282">
    <property type="taxonomic scope" value="Bacteria"/>
</dbReference>
<dbReference type="HOGENOM" id="CLU_020352_0_1_9"/>
<dbReference type="OrthoDB" id="9802453at2"/>
<dbReference type="UniPathway" id="UPA00340">
    <property type="reaction ID" value="UER00458"/>
</dbReference>
<dbReference type="Proteomes" id="UP000002196">
    <property type="component" value="Chromosome"/>
</dbReference>
<dbReference type="GO" id="GO:0005737">
    <property type="term" value="C:cytoplasm"/>
    <property type="evidence" value="ECO:0007669"/>
    <property type="project" value="UniProtKB-SubCell"/>
</dbReference>
<dbReference type="GO" id="GO:0008776">
    <property type="term" value="F:acetate kinase activity"/>
    <property type="evidence" value="ECO:0007669"/>
    <property type="project" value="UniProtKB-UniRule"/>
</dbReference>
<dbReference type="GO" id="GO:0005524">
    <property type="term" value="F:ATP binding"/>
    <property type="evidence" value="ECO:0007669"/>
    <property type="project" value="UniProtKB-KW"/>
</dbReference>
<dbReference type="GO" id="GO:0000287">
    <property type="term" value="F:magnesium ion binding"/>
    <property type="evidence" value="ECO:0007669"/>
    <property type="project" value="UniProtKB-UniRule"/>
</dbReference>
<dbReference type="GO" id="GO:0006083">
    <property type="term" value="P:acetate metabolic process"/>
    <property type="evidence" value="ECO:0007669"/>
    <property type="project" value="TreeGrafter"/>
</dbReference>
<dbReference type="GO" id="GO:0006085">
    <property type="term" value="P:acetyl-CoA biosynthetic process"/>
    <property type="evidence" value="ECO:0007669"/>
    <property type="project" value="UniProtKB-UniRule"/>
</dbReference>
<dbReference type="CDD" id="cd24010">
    <property type="entry name" value="ASKHA_NBD_AcK_PK"/>
    <property type="match status" value="1"/>
</dbReference>
<dbReference type="Gene3D" id="3.30.420.40">
    <property type="match status" value="2"/>
</dbReference>
<dbReference type="HAMAP" id="MF_00020">
    <property type="entry name" value="Acetate_kinase"/>
    <property type="match status" value="1"/>
</dbReference>
<dbReference type="InterPro" id="IPR004372">
    <property type="entry name" value="Ac/propionate_kinase"/>
</dbReference>
<dbReference type="InterPro" id="IPR000890">
    <property type="entry name" value="Aliphatic_acid_kin_short-chain"/>
</dbReference>
<dbReference type="InterPro" id="IPR023865">
    <property type="entry name" value="Aliphatic_acid_kinase_CS"/>
</dbReference>
<dbReference type="InterPro" id="IPR043129">
    <property type="entry name" value="ATPase_NBD"/>
</dbReference>
<dbReference type="NCBIfam" id="TIGR00016">
    <property type="entry name" value="ackA"/>
    <property type="match status" value="1"/>
</dbReference>
<dbReference type="PANTHER" id="PTHR21060">
    <property type="entry name" value="ACETATE KINASE"/>
    <property type="match status" value="1"/>
</dbReference>
<dbReference type="PANTHER" id="PTHR21060:SF15">
    <property type="entry name" value="ACETATE KINASE-RELATED"/>
    <property type="match status" value="1"/>
</dbReference>
<dbReference type="Pfam" id="PF00871">
    <property type="entry name" value="Acetate_kinase"/>
    <property type="match status" value="1"/>
</dbReference>
<dbReference type="PIRSF" id="PIRSF000722">
    <property type="entry name" value="Acetate_prop_kin"/>
    <property type="match status" value="1"/>
</dbReference>
<dbReference type="PRINTS" id="PR00471">
    <property type="entry name" value="ACETATEKNASE"/>
</dbReference>
<dbReference type="SUPFAM" id="SSF53067">
    <property type="entry name" value="Actin-like ATPase domain"/>
    <property type="match status" value="2"/>
</dbReference>
<dbReference type="PROSITE" id="PS01075">
    <property type="entry name" value="ACETATE_KINASE_1"/>
    <property type="match status" value="1"/>
</dbReference>
<dbReference type="PROSITE" id="PS01076">
    <property type="entry name" value="ACETATE_KINASE_2"/>
    <property type="match status" value="1"/>
</dbReference>
<comment type="function">
    <text evidence="1">Catalyzes the formation of acetyl phosphate from acetate and ATP. Can also catalyze the reverse reaction.</text>
</comment>
<comment type="catalytic activity">
    <reaction evidence="1">
        <text>acetate + ATP = acetyl phosphate + ADP</text>
        <dbReference type="Rhea" id="RHEA:11352"/>
        <dbReference type="ChEBI" id="CHEBI:22191"/>
        <dbReference type="ChEBI" id="CHEBI:30089"/>
        <dbReference type="ChEBI" id="CHEBI:30616"/>
        <dbReference type="ChEBI" id="CHEBI:456216"/>
        <dbReference type="EC" id="2.7.2.1"/>
    </reaction>
</comment>
<comment type="cofactor">
    <cofactor evidence="1">
        <name>Mg(2+)</name>
        <dbReference type="ChEBI" id="CHEBI:18420"/>
    </cofactor>
    <cofactor evidence="1">
        <name>Mn(2+)</name>
        <dbReference type="ChEBI" id="CHEBI:29035"/>
    </cofactor>
    <text evidence="1">Mg(2+). Can also accept Mn(2+).</text>
</comment>
<comment type="pathway">
    <text evidence="1">Metabolic intermediate biosynthesis; acetyl-CoA biosynthesis; acetyl-CoA from acetate: step 1/2.</text>
</comment>
<comment type="subunit">
    <text evidence="1">Homodimer.</text>
</comment>
<comment type="subcellular location">
    <subcellularLocation>
        <location evidence="1">Cytoplasm</location>
    </subcellularLocation>
</comment>
<comment type="similarity">
    <text evidence="1">Belongs to the acetokinase family.</text>
</comment>